<keyword id="KW-0312">Gluconeogenesis</keyword>
<keyword id="KW-0324">Glycolysis</keyword>
<keyword id="KW-0413">Isomerase</keyword>
<keyword id="KW-1185">Reference proteome</keyword>
<comment type="function">
    <text evidence="1">Catalyzes the interconversion of 2-phosphoglycerate and 3-phosphoglycerate.</text>
</comment>
<comment type="catalytic activity">
    <reaction evidence="1">
        <text>(2R)-2-phosphoglycerate = (2R)-3-phosphoglycerate</text>
        <dbReference type="Rhea" id="RHEA:15901"/>
        <dbReference type="ChEBI" id="CHEBI:58272"/>
        <dbReference type="ChEBI" id="CHEBI:58289"/>
        <dbReference type="EC" id="5.4.2.11"/>
    </reaction>
</comment>
<comment type="pathway">
    <text evidence="1">Carbohydrate degradation; glycolysis; pyruvate from D-glyceraldehyde 3-phosphate: step 3/5.</text>
</comment>
<comment type="similarity">
    <text evidence="1">Belongs to the phosphoglycerate mutase family. BPG-dependent PGAM subfamily.</text>
</comment>
<dbReference type="EC" id="5.4.2.11" evidence="1"/>
<dbReference type="EMBL" id="CP000140">
    <property type="protein sequence ID" value="ABR42372.1"/>
    <property type="molecule type" value="Genomic_DNA"/>
</dbReference>
<dbReference type="RefSeq" id="WP_005857811.1">
    <property type="nucleotide sequence ID" value="NC_009615.1"/>
</dbReference>
<dbReference type="SMR" id="A6L9K8"/>
<dbReference type="STRING" id="435591.BDI_0596"/>
<dbReference type="PaxDb" id="435591-BDI_0596"/>
<dbReference type="KEGG" id="pdi:BDI_0596"/>
<dbReference type="eggNOG" id="COG0588">
    <property type="taxonomic scope" value="Bacteria"/>
</dbReference>
<dbReference type="HOGENOM" id="CLU_033323_1_1_10"/>
<dbReference type="BioCyc" id="PDIS435591:G1G5A-613-MONOMER"/>
<dbReference type="UniPathway" id="UPA00109">
    <property type="reaction ID" value="UER00186"/>
</dbReference>
<dbReference type="Proteomes" id="UP000000566">
    <property type="component" value="Chromosome"/>
</dbReference>
<dbReference type="GO" id="GO:0004619">
    <property type="term" value="F:phosphoglycerate mutase activity"/>
    <property type="evidence" value="ECO:0007669"/>
    <property type="project" value="UniProtKB-EC"/>
</dbReference>
<dbReference type="GO" id="GO:0006094">
    <property type="term" value="P:gluconeogenesis"/>
    <property type="evidence" value="ECO:0007669"/>
    <property type="project" value="UniProtKB-UniRule"/>
</dbReference>
<dbReference type="GO" id="GO:0006096">
    <property type="term" value="P:glycolytic process"/>
    <property type="evidence" value="ECO:0007669"/>
    <property type="project" value="UniProtKB-UniRule"/>
</dbReference>
<dbReference type="CDD" id="cd07067">
    <property type="entry name" value="HP_PGM_like"/>
    <property type="match status" value="1"/>
</dbReference>
<dbReference type="FunFam" id="3.40.50.1240:FF:000003">
    <property type="entry name" value="2,3-bisphosphoglycerate-dependent phosphoglycerate mutase"/>
    <property type="match status" value="1"/>
</dbReference>
<dbReference type="Gene3D" id="3.40.50.1240">
    <property type="entry name" value="Phosphoglycerate mutase-like"/>
    <property type="match status" value="1"/>
</dbReference>
<dbReference type="HAMAP" id="MF_01039">
    <property type="entry name" value="PGAM_GpmA"/>
    <property type="match status" value="1"/>
</dbReference>
<dbReference type="InterPro" id="IPR013078">
    <property type="entry name" value="His_Pase_superF_clade-1"/>
</dbReference>
<dbReference type="InterPro" id="IPR029033">
    <property type="entry name" value="His_PPase_superfam"/>
</dbReference>
<dbReference type="InterPro" id="IPR001345">
    <property type="entry name" value="PG/BPGM_mutase_AS"/>
</dbReference>
<dbReference type="InterPro" id="IPR005952">
    <property type="entry name" value="Phosphogly_mut1"/>
</dbReference>
<dbReference type="NCBIfam" id="TIGR01258">
    <property type="entry name" value="pgm_1"/>
    <property type="match status" value="1"/>
</dbReference>
<dbReference type="NCBIfam" id="NF010713">
    <property type="entry name" value="PRK14115.1"/>
    <property type="match status" value="1"/>
</dbReference>
<dbReference type="PANTHER" id="PTHR11931">
    <property type="entry name" value="PHOSPHOGLYCERATE MUTASE"/>
    <property type="match status" value="1"/>
</dbReference>
<dbReference type="Pfam" id="PF00300">
    <property type="entry name" value="His_Phos_1"/>
    <property type="match status" value="2"/>
</dbReference>
<dbReference type="PIRSF" id="PIRSF000709">
    <property type="entry name" value="6PFK_2-Ptase"/>
    <property type="match status" value="1"/>
</dbReference>
<dbReference type="SMART" id="SM00855">
    <property type="entry name" value="PGAM"/>
    <property type="match status" value="1"/>
</dbReference>
<dbReference type="SUPFAM" id="SSF53254">
    <property type="entry name" value="Phosphoglycerate mutase-like"/>
    <property type="match status" value="1"/>
</dbReference>
<dbReference type="PROSITE" id="PS00175">
    <property type="entry name" value="PG_MUTASE"/>
    <property type="match status" value="1"/>
</dbReference>
<protein>
    <recommendedName>
        <fullName evidence="1">2,3-bisphosphoglycerate-dependent phosphoglycerate mutase</fullName>
        <shortName evidence="1">BPG-dependent PGAM</shortName>
        <shortName evidence="1">PGAM</shortName>
        <shortName evidence="1">Phosphoglyceromutase</shortName>
        <shortName evidence="1">dPGM</shortName>
        <ecNumber evidence="1">5.4.2.11</ecNumber>
    </recommendedName>
</protein>
<sequence length="248" mass="28893">MKSIVLLRHGESIWNKENRFTGWTDVDLTEKGVAEAYRAGNLLKEKGYVFNKAYTSYLKRAVKTLNCVLDRMDQDWIPVEKSWRLNEKHYGSLQGLNKSETAQKYGDEQVLIWRRSYDIAPLPLSEDDPRNPRFDIRYKDVPDKELPRTESLKDTVERILPYWKEVIFPTLRTADQILVAAHGNSLRGIIKYLKNISDEEIVHLNLPTAVPYVFEFDDDLKLVNDYFLGDPEEIKKLMEAVANQGKKK</sequence>
<name>GPMA_PARD8</name>
<gene>
    <name evidence="1" type="primary">gpmA</name>
    <name type="ordered locus">BDI_0596</name>
</gene>
<evidence type="ECO:0000255" key="1">
    <source>
        <dbReference type="HAMAP-Rule" id="MF_01039"/>
    </source>
</evidence>
<organism>
    <name type="scientific">Parabacteroides distasonis (strain ATCC 8503 / DSM 20701 / CIP 104284 / JCM 5825 / NCTC 11152)</name>
    <dbReference type="NCBI Taxonomy" id="435591"/>
    <lineage>
        <taxon>Bacteria</taxon>
        <taxon>Pseudomonadati</taxon>
        <taxon>Bacteroidota</taxon>
        <taxon>Bacteroidia</taxon>
        <taxon>Bacteroidales</taxon>
        <taxon>Tannerellaceae</taxon>
        <taxon>Parabacteroides</taxon>
    </lineage>
</organism>
<feature type="chain" id="PRO_1000064086" description="2,3-bisphosphoglycerate-dependent phosphoglycerate mutase">
    <location>
        <begin position="1"/>
        <end position="248"/>
    </location>
</feature>
<feature type="active site" description="Tele-phosphohistidine intermediate" evidence="1">
    <location>
        <position position="9"/>
    </location>
</feature>
<feature type="active site" description="Proton donor/acceptor" evidence="1">
    <location>
        <position position="87"/>
    </location>
</feature>
<feature type="binding site" evidence="1">
    <location>
        <begin position="8"/>
        <end position="15"/>
    </location>
    <ligand>
        <name>substrate</name>
    </ligand>
</feature>
<feature type="binding site" evidence="1">
    <location>
        <begin position="21"/>
        <end position="22"/>
    </location>
    <ligand>
        <name>substrate</name>
    </ligand>
</feature>
<feature type="binding site" evidence="1">
    <location>
        <position position="60"/>
    </location>
    <ligand>
        <name>substrate</name>
    </ligand>
</feature>
<feature type="binding site" evidence="1">
    <location>
        <begin position="87"/>
        <end position="90"/>
    </location>
    <ligand>
        <name>substrate</name>
    </ligand>
</feature>
<feature type="binding site" evidence="1">
    <location>
        <position position="98"/>
    </location>
    <ligand>
        <name>substrate</name>
    </ligand>
</feature>
<feature type="binding site" evidence="1">
    <location>
        <begin position="114"/>
        <end position="115"/>
    </location>
    <ligand>
        <name>substrate</name>
    </ligand>
</feature>
<feature type="binding site" evidence="1">
    <location>
        <begin position="183"/>
        <end position="184"/>
    </location>
    <ligand>
        <name>substrate</name>
    </ligand>
</feature>
<feature type="site" description="Transition state stabilizer" evidence="1">
    <location>
        <position position="182"/>
    </location>
</feature>
<reference key="1">
    <citation type="journal article" date="2007" name="PLoS Biol.">
        <title>Evolution of symbiotic bacteria in the distal human intestine.</title>
        <authorList>
            <person name="Xu J."/>
            <person name="Mahowald M.A."/>
            <person name="Ley R.E."/>
            <person name="Lozupone C.A."/>
            <person name="Hamady M."/>
            <person name="Martens E.C."/>
            <person name="Henrissat B."/>
            <person name="Coutinho P.M."/>
            <person name="Minx P."/>
            <person name="Latreille P."/>
            <person name="Cordum H."/>
            <person name="Van Brunt A."/>
            <person name="Kim K."/>
            <person name="Fulton R.S."/>
            <person name="Fulton L.A."/>
            <person name="Clifton S.W."/>
            <person name="Wilson R.K."/>
            <person name="Knight R.D."/>
            <person name="Gordon J.I."/>
        </authorList>
    </citation>
    <scope>NUCLEOTIDE SEQUENCE [LARGE SCALE GENOMIC DNA]</scope>
    <source>
        <strain>ATCC 8503 / DSM 20701 / CIP 104284 / JCM 5825 / NCTC 11152</strain>
    </source>
</reference>
<accession>A6L9K8</accession>
<proteinExistence type="inferred from homology"/>